<gene>
    <name type="primary">yadH</name>
    <name type="ordered locus">c0157</name>
</gene>
<comment type="subcellular location">
    <subcellularLocation>
        <location evidence="1">Cell inner membrane</location>
        <topology evidence="1">Multi-pass membrane protein</topology>
    </subcellularLocation>
</comment>
<comment type="similarity">
    <text evidence="4">Belongs to the ABC-2 integral membrane protein family.</text>
</comment>
<evidence type="ECO:0000250" key="1"/>
<evidence type="ECO:0000255" key="2"/>
<evidence type="ECO:0000255" key="3">
    <source>
        <dbReference type="PROSITE-ProRule" id="PRU00442"/>
    </source>
</evidence>
<evidence type="ECO:0000305" key="4"/>
<feature type="chain" id="PRO_0000183000" description="Inner membrane transport permease YadH">
    <location>
        <begin position="1"/>
        <end position="256"/>
    </location>
</feature>
<feature type="topological domain" description="Periplasmic" evidence="2">
    <location>
        <begin position="1"/>
        <end position="22"/>
    </location>
</feature>
<feature type="transmembrane region" description="Helical" evidence="2">
    <location>
        <begin position="23"/>
        <end position="43"/>
    </location>
</feature>
<feature type="topological domain" description="Cytoplasmic" evidence="2">
    <location>
        <begin position="44"/>
        <end position="52"/>
    </location>
</feature>
<feature type="transmembrane region" description="Helical" evidence="2">
    <location>
        <begin position="53"/>
        <end position="73"/>
    </location>
</feature>
<feature type="topological domain" description="Periplasmic" evidence="2">
    <location>
        <begin position="74"/>
        <end position="94"/>
    </location>
</feature>
<feature type="transmembrane region" description="Helical" evidence="2">
    <location>
        <begin position="95"/>
        <end position="115"/>
    </location>
</feature>
<feature type="topological domain" description="Cytoplasmic" evidence="2">
    <location>
        <position position="116"/>
    </location>
</feature>
<feature type="transmembrane region" description="Helical" evidence="2">
    <location>
        <begin position="117"/>
        <end position="137"/>
    </location>
</feature>
<feature type="topological domain" description="Periplasmic" evidence="2">
    <location>
        <position position="138"/>
    </location>
</feature>
<feature type="transmembrane region" description="Helical" evidence="2">
    <location>
        <begin position="139"/>
        <end position="159"/>
    </location>
</feature>
<feature type="topological domain" description="Cytoplasmic" evidence="2">
    <location>
        <begin position="160"/>
        <end position="169"/>
    </location>
</feature>
<feature type="transmembrane region" description="Helical" evidence="2">
    <location>
        <begin position="170"/>
        <end position="190"/>
    </location>
</feature>
<feature type="topological domain" description="Periplasmic" evidence="2">
    <location>
        <begin position="191"/>
        <end position="223"/>
    </location>
</feature>
<feature type="transmembrane region" description="Helical" evidence="2">
    <location>
        <begin position="224"/>
        <end position="244"/>
    </location>
</feature>
<feature type="topological domain" description="Cytoplasmic" evidence="2">
    <location>
        <begin position="245"/>
        <end position="256"/>
    </location>
</feature>
<feature type="domain" description="ABC transmembrane type-2" evidence="3">
    <location>
        <begin position="22"/>
        <end position="251"/>
    </location>
</feature>
<dbReference type="EMBL" id="AE014075">
    <property type="protein sequence ID" value="AAN78651.1"/>
    <property type="molecule type" value="Genomic_DNA"/>
</dbReference>
<dbReference type="RefSeq" id="WP_000972203.1">
    <property type="nucleotide sequence ID" value="NZ_CP051263.1"/>
</dbReference>
<dbReference type="SMR" id="P0AFN7"/>
<dbReference type="STRING" id="199310.c0157"/>
<dbReference type="KEGG" id="ecc:c0157"/>
<dbReference type="eggNOG" id="COG0842">
    <property type="taxonomic scope" value="Bacteria"/>
</dbReference>
<dbReference type="HOGENOM" id="CLU_039483_3_0_6"/>
<dbReference type="BioCyc" id="ECOL199310:C0157-MONOMER"/>
<dbReference type="Proteomes" id="UP000001410">
    <property type="component" value="Chromosome"/>
</dbReference>
<dbReference type="GO" id="GO:0043190">
    <property type="term" value="C:ATP-binding cassette (ABC) transporter complex"/>
    <property type="evidence" value="ECO:0007669"/>
    <property type="project" value="InterPro"/>
</dbReference>
<dbReference type="GO" id="GO:0140359">
    <property type="term" value="F:ABC-type transporter activity"/>
    <property type="evidence" value="ECO:0007669"/>
    <property type="project" value="InterPro"/>
</dbReference>
<dbReference type="InterPro" id="IPR052522">
    <property type="entry name" value="ABC-2_transport_permease"/>
</dbReference>
<dbReference type="InterPro" id="IPR013525">
    <property type="entry name" value="ABC2_TM"/>
</dbReference>
<dbReference type="InterPro" id="IPR047817">
    <property type="entry name" value="ABC2_TM_bact-type"/>
</dbReference>
<dbReference type="InterPro" id="IPR000412">
    <property type="entry name" value="ABC_2_transport"/>
</dbReference>
<dbReference type="NCBIfam" id="NF011648">
    <property type="entry name" value="PRK15066.1"/>
    <property type="match status" value="1"/>
</dbReference>
<dbReference type="PANTHER" id="PTHR43332:SF2">
    <property type="entry name" value="INNER MEMBRANE TRANSPORT PERMEASE YADH"/>
    <property type="match status" value="1"/>
</dbReference>
<dbReference type="PANTHER" id="PTHR43332">
    <property type="entry name" value="INNER MEMBRANE TRANSPORT PERMEASE YADH-RELATED"/>
    <property type="match status" value="1"/>
</dbReference>
<dbReference type="Pfam" id="PF01061">
    <property type="entry name" value="ABC2_membrane"/>
    <property type="match status" value="1"/>
</dbReference>
<dbReference type="PIRSF" id="PIRSF006648">
    <property type="entry name" value="DrrB"/>
    <property type="match status" value="1"/>
</dbReference>
<dbReference type="PRINTS" id="PR00164">
    <property type="entry name" value="ABC2TRNSPORT"/>
</dbReference>
<dbReference type="PROSITE" id="PS51012">
    <property type="entry name" value="ABC_TM2"/>
    <property type="match status" value="1"/>
</dbReference>
<keyword id="KW-0997">Cell inner membrane</keyword>
<keyword id="KW-1003">Cell membrane</keyword>
<keyword id="KW-0472">Membrane</keyword>
<keyword id="KW-1185">Reference proteome</keyword>
<keyword id="KW-0812">Transmembrane</keyword>
<keyword id="KW-1133">Transmembrane helix</keyword>
<keyword id="KW-0813">Transport</keyword>
<proteinExistence type="inferred from homology"/>
<sequence length="256" mass="28516">MMHLYWVALKSIWAKEIHRFMRIWVQTLVPPVITMTLYFIIFGNLIGSRIGDMHGFSYMQFIVPGLIMMSVITNAYANVASSFFGAKFQRNIEELLVAPVPTHVIIAGYVGGGVARGLFVGILVTAISLFFVPFQVHSWVFVALTLVLTAVLFSLAGLLNGVFAKTFDDISLVPTFVLTPLTYLGGVFYSLTLLPPFWQGLSHLNPIVYMISGFRYGFLGINDVPLVTTFGVLVVFIVAFYLICWSLIQRGRGLRS</sequence>
<name>YADH_ECOL6</name>
<accession>P0AFN7</accession>
<accession>P36880</accession>
<accession>P75657</accession>
<accession>Q8KMY9</accession>
<organism>
    <name type="scientific">Escherichia coli O6:H1 (strain CFT073 / ATCC 700928 / UPEC)</name>
    <dbReference type="NCBI Taxonomy" id="199310"/>
    <lineage>
        <taxon>Bacteria</taxon>
        <taxon>Pseudomonadati</taxon>
        <taxon>Pseudomonadota</taxon>
        <taxon>Gammaproteobacteria</taxon>
        <taxon>Enterobacterales</taxon>
        <taxon>Enterobacteriaceae</taxon>
        <taxon>Escherichia</taxon>
    </lineage>
</organism>
<protein>
    <recommendedName>
        <fullName>Inner membrane transport permease YadH</fullName>
    </recommendedName>
</protein>
<reference key="1">
    <citation type="journal article" date="2002" name="Proc. Natl. Acad. Sci. U.S.A.">
        <title>Extensive mosaic structure revealed by the complete genome sequence of uropathogenic Escherichia coli.</title>
        <authorList>
            <person name="Welch R.A."/>
            <person name="Burland V."/>
            <person name="Plunkett G. III"/>
            <person name="Redford P."/>
            <person name="Roesch P."/>
            <person name="Rasko D."/>
            <person name="Buckles E.L."/>
            <person name="Liou S.-R."/>
            <person name="Boutin A."/>
            <person name="Hackett J."/>
            <person name="Stroud D."/>
            <person name="Mayhew G.F."/>
            <person name="Rose D.J."/>
            <person name="Zhou S."/>
            <person name="Schwartz D.C."/>
            <person name="Perna N.T."/>
            <person name="Mobley H.L.T."/>
            <person name="Donnenberg M.S."/>
            <person name="Blattner F.R."/>
        </authorList>
    </citation>
    <scope>NUCLEOTIDE SEQUENCE [LARGE SCALE GENOMIC DNA]</scope>
    <source>
        <strain>CFT073 / ATCC 700928 / UPEC</strain>
    </source>
</reference>